<sequence length="810" mass="89415">MPMDVILVLWFCVCTARTVLGFGMDPDLQMDIITELDLVNTTLGVTQVAGLHNASKAFLFQDVQREIHSAPHVSEKLIQLFRNKSEFTFLATVQQKPSTSGVILSIRELEHSYFELESSGPREEIRYHYIHGGKPRTEALPYRMADGQWHKVALSVSASHLLLHVDCNRIYERVIDPPETNLPPGSNLWLGQRNQKHGFFKGIIQDGKIIFMPNGFITQCPNLNRTCPTCSDFLSLVQGIMDLQELLAKMTAKLNYAETRLGQLENCHCEKTCQVSGLLYRDQDSWVDGDNCRNCTCKSGAVECRRMSCPPLNCSPDSLPVHISGQCCKVCRPKCIYGGKVLAEGQRILTKTCRECRGGVLVKITEACPPLNCSEKDHILPENQCCRVCRGHNFCAEAPKCGENSECKNWNTKATCECKNGYISVQGNSAYCEDIDECAAKMHYCHANTVCVNLPGLYRCDCIPGYIRVDDFSCTEHDDCGSGQHNCDKNAICTNTVQGHSCTCQPGYVGNGTVCKAFCEEGCRYGGTCVAPNKCVCPSGFTGSHCEKDIDECAEGFVECHNHSRCVNLPGWYHCECRSGFHDDGTYSLSGESCIDIDECALRTHTCWNDSACINLAGGFDCLCPSGPSCSGDCPHEGGLKHNGQVWILREDRCSVCSCKDGKIFCRRTACDCQNPNVDLFCCPECDTRVTSQCLDQSGQKLYRSGDNWTHSCQQCRCLEGEADCWPLACPSLSCEYTAIFEGECCPRCVSDPCLADNIAYDIRKTCLDSSGISRLSGAVWTMAGSPCTTCQCKNGRVCCSVDLVCLENN</sequence>
<accession>Q2VWQ2</accession>
<protein>
    <recommendedName>
        <fullName>Protein kinase C-binding protein NELL1</fullName>
    </recommendedName>
    <alternativeName>
        <fullName>NEL-like protein 1</fullName>
    </alternativeName>
</protein>
<keyword id="KW-0106">Calcium</keyword>
<keyword id="KW-0963">Cytoplasm</keyword>
<keyword id="KW-0221">Differentiation</keyword>
<keyword id="KW-1015">Disulfide bond</keyword>
<keyword id="KW-0245">EGF-like domain</keyword>
<keyword id="KW-0325">Glycoprotein</keyword>
<keyword id="KW-0479">Metal-binding</keyword>
<keyword id="KW-0539">Nucleus</keyword>
<keyword id="KW-1185">Reference proteome</keyword>
<keyword id="KW-0677">Repeat</keyword>
<keyword id="KW-0964">Secreted</keyword>
<keyword id="KW-0732">Signal</keyword>
<evidence type="ECO:0000250" key="1">
    <source>
        <dbReference type="UniProtKB" id="Q62919"/>
    </source>
</evidence>
<evidence type="ECO:0000250" key="2">
    <source>
        <dbReference type="UniProtKB" id="Q92832"/>
    </source>
</evidence>
<evidence type="ECO:0000255" key="3"/>
<evidence type="ECO:0000255" key="4">
    <source>
        <dbReference type="PROSITE-ProRule" id="PRU00076"/>
    </source>
</evidence>
<evidence type="ECO:0000255" key="5">
    <source>
        <dbReference type="PROSITE-ProRule" id="PRU00122"/>
    </source>
</evidence>
<evidence type="ECO:0000255" key="6">
    <source>
        <dbReference type="PROSITE-ProRule" id="PRU00220"/>
    </source>
</evidence>
<evidence type="ECO:0000269" key="7">
    <source>
    </source>
</evidence>
<evidence type="ECO:0000269" key="8">
    <source>
    </source>
</evidence>
<organism>
    <name type="scientific">Mus musculus</name>
    <name type="common">Mouse</name>
    <dbReference type="NCBI Taxonomy" id="10090"/>
    <lineage>
        <taxon>Eukaryota</taxon>
        <taxon>Metazoa</taxon>
        <taxon>Chordata</taxon>
        <taxon>Craniata</taxon>
        <taxon>Vertebrata</taxon>
        <taxon>Euteleostomi</taxon>
        <taxon>Mammalia</taxon>
        <taxon>Eutheria</taxon>
        <taxon>Euarchontoglires</taxon>
        <taxon>Glires</taxon>
        <taxon>Rodentia</taxon>
        <taxon>Myomorpha</taxon>
        <taxon>Muroidea</taxon>
        <taxon>Muridae</taxon>
        <taxon>Murinae</taxon>
        <taxon>Mus</taxon>
        <taxon>Mus</taxon>
    </lineage>
</organism>
<dbReference type="EMBL" id="AY622226">
    <property type="protein sequence ID" value="AAV41488.1"/>
    <property type="molecule type" value="mRNA"/>
</dbReference>
<dbReference type="CCDS" id="CCDS21309.1"/>
<dbReference type="RefSeq" id="NP_001032995.1">
    <property type="nucleotide sequence ID" value="NM_001037906.2"/>
</dbReference>
<dbReference type="SMR" id="Q2VWQ2"/>
<dbReference type="BioGRID" id="237208">
    <property type="interactions" value="7"/>
</dbReference>
<dbReference type="FunCoup" id="Q2VWQ2">
    <property type="interactions" value="255"/>
</dbReference>
<dbReference type="STRING" id="10090.ENSMUSP00000080550"/>
<dbReference type="GlyConnect" id="2633">
    <property type="glycosylation" value="1 N-Linked glycan (1 site)"/>
</dbReference>
<dbReference type="GlyCosmos" id="Q2VWQ2">
    <property type="glycosylation" value="10 sites, 1 glycan"/>
</dbReference>
<dbReference type="GlyGen" id="Q2VWQ2">
    <property type="glycosylation" value="12 sites, 6 N-linked glycans (8 sites), 1 O-linked glycan (1 site)"/>
</dbReference>
<dbReference type="iPTMnet" id="Q2VWQ2"/>
<dbReference type="PhosphoSitePlus" id="Q2VWQ2"/>
<dbReference type="PaxDb" id="10090-ENSMUSP00000080550"/>
<dbReference type="ProteomicsDB" id="252821"/>
<dbReference type="Antibodypedia" id="25294">
    <property type="antibodies" value="155 antibodies from 25 providers"/>
</dbReference>
<dbReference type="DNASU" id="338352"/>
<dbReference type="Ensembl" id="ENSMUST00000081872.13">
    <property type="protein sequence ID" value="ENSMUSP00000080550.6"/>
    <property type="gene ID" value="ENSMUSG00000055409.15"/>
</dbReference>
<dbReference type="GeneID" id="338352"/>
<dbReference type="KEGG" id="mmu:338352"/>
<dbReference type="UCSC" id="uc009hbx.1">
    <property type="organism name" value="mouse"/>
</dbReference>
<dbReference type="AGR" id="MGI:2443902"/>
<dbReference type="CTD" id="4745"/>
<dbReference type="MGI" id="MGI:2443902">
    <property type="gene designation" value="Nell1"/>
</dbReference>
<dbReference type="VEuPathDB" id="HostDB:ENSMUSG00000055409"/>
<dbReference type="eggNOG" id="KOG1217">
    <property type="taxonomic scope" value="Eukaryota"/>
</dbReference>
<dbReference type="GeneTree" id="ENSGT00810000125439"/>
<dbReference type="HOGENOM" id="CLU_006887_0_0_1"/>
<dbReference type="InParanoid" id="Q2VWQ2"/>
<dbReference type="OMA" id="ATCECKT"/>
<dbReference type="OrthoDB" id="6516201at2759"/>
<dbReference type="PhylomeDB" id="Q2VWQ2"/>
<dbReference type="TreeFam" id="TF323325"/>
<dbReference type="BioGRID-ORCS" id="338352">
    <property type="hits" value="1 hit in 78 CRISPR screens"/>
</dbReference>
<dbReference type="ChiTaRS" id="Nell1">
    <property type="organism name" value="mouse"/>
</dbReference>
<dbReference type="PRO" id="PR:Q2VWQ2"/>
<dbReference type="Proteomes" id="UP000000589">
    <property type="component" value="Chromosome 7"/>
</dbReference>
<dbReference type="RNAct" id="Q2VWQ2">
    <property type="molecule type" value="protein"/>
</dbReference>
<dbReference type="Bgee" id="ENSMUSG00000055409">
    <property type="expression patterns" value="Expressed in medial geniculate body and 119 other cell types or tissues"/>
</dbReference>
<dbReference type="ExpressionAtlas" id="Q2VWQ2">
    <property type="expression patterns" value="baseline and differential"/>
</dbReference>
<dbReference type="GO" id="GO:0005737">
    <property type="term" value="C:cytoplasm"/>
    <property type="evidence" value="ECO:0000250"/>
    <property type="project" value="UniProtKB"/>
</dbReference>
<dbReference type="GO" id="GO:0005576">
    <property type="term" value="C:extracellular region"/>
    <property type="evidence" value="ECO:0007669"/>
    <property type="project" value="UniProtKB-SubCell"/>
</dbReference>
<dbReference type="GO" id="GO:0005635">
    <property type="term" value="C:nuclear envelope"/>
    <property type="evidence" value="ECO:0000250"/>
    <property type="project" value="UniProtKB"/>
</dbReference>
<dbReference type="GO" id="GO:0048471">
    <property type="term" value="C:perinuclear region of cytoplasm"/>
    <property type="evidence" value="ECO:0000250"/>
    <property type="project" value="UniProtKB"/>
</dbReference>
<dbReference type="GO" id="GO:0005509">
    <property type="term" value="F:calcium ion binding"/>
    <property type="evidence" value="ECO:0007669"/>
    <property type="project" value="InterPro"/>
</dbReference>
<dbReference type="GO" id="GO:0030154">
    <property type="term" value="P:cell differentiation"/>
    <property type="evidence" value="ECO:0007669"/>
    <property type="project" value="UniProtKB-KW"/>
</dbReference>
<dbReference type="GO" id="GO:0033689">
    <property type="term" value="P:negative regulation of osteoblast proliferation"/>
    <property type="evidence" value="ECO:0000250"/>
    <property type="project" value="UniProtKB"/>
</dbReference>
<dbReference type="GO" id="GO:0042177">
    <property type="term" value="P:negative regulation of protein catabolic process"/>
    <property type="evidence" value="ECO:0000250"/>
    <property type="project" value="UniProtKB"/>
</dbReference>
<dbReference type="GO" id="GO:0030501">
    <property type="term" value="P:positive regulation of bone mineralization"/>
    <property type="evidence" value="ECO:0000250"/>
    <property type="project" value="UniProtKB"/>
</dbReference>
<dbReference type="GO" id="GO:0045669">
    <property type="term" value="P:positive regulation of osteoblast differentiation"/>
    <property type="evidence" value="ECO:0000250"/>
    <property type="project" value="UniProtKB"/>
</dbReference>
<dbReference type="GO" id="GO:0010468">
    <property type="term" value="P:regulation of gene expression"/>
    <property type="evidence" value="ECO:0000250"/>
    <property type="project" value="UniProtKB"/>
</dbReference>
<dbReference type="CDD" id="cd00054">
    <property type="entry name" value="EGF_CA"/>
    <property type="match status" value="4"/>
</dbReference>
<dbReference type="CDD" id="cd00110">
    <property type="entry name" value="LamG"/>
    <property type="match status" value="1"/>
</dbReference>
<dbReference type="FunFam" id="2.10.25.10:FF:000121">
    <property type="entry name" value="Neural EGFL like 2"/>
    <property type="match status" value="1"/>
</dbReference>
<dbReference type="FunFam" id="2.10.25.10:FF:000120">
    <property type="entry name" value="Protein kinase C-binding protein NELL1"/>
    <property type="match status" value="1"/>
</dbReference>
<dbReference type="FunFam" id="2.10.25.10:FF:000211">
    <property type="entry name" value="Protein kinase C-binding protein NELL1"/>
    <property type="match status" value="1"/>
</dbReference>
<dbReference type="FunFam" id="2.10.25.10:FF:000221">
    <property type="entry name" value="Protein kinase C-binding protein NELL1"/>
    <property type="match status" value="1"/>
</dbReference>
<dbReference type="FunFam" id="2.60.120.200:FF:000015">
    <property type="entry name" value="protein kinase C-binding protein NELL1"/>
    <property type="match status" value="1"/>
</dbReference>
<dbReference type="FunFam" id="2.10.25.10:FF:000102">
    <property type="entry name" value="Protein kinase C-binding protein NELL2"/>
    <property type="match status" value="1"/>
</dbReference>
<dbReference type="FunFam" id="2.10.25.10:FF:000111">
    <property type="entry name" value="Protein kinase C-binding protein NELL2"/>
    <property type="match status" value="1"/>
</dbReference>
<dbReference type="FunFam" id="2.10.70.10:FF:000023">
    <property type="entry name" value="protein kinase C-binding protein NELL2"/>
    <property type="match status" value="1"/>
</dbReference>
<dbReference type="Gene3D" id="2.60.120.200">
    <property type="match status" value="1"/>
</dbReference>
<dbReference type="Gene3D" id="6.20.200.20">
    <property type="match status" value="2"/>
</dbReference>
<dbReference type="Gene3D" id="2.10.70.10">
    <property type="entry name" value="Complement Module, domain 1"/>
    <property type="match status" value="1"/>
</dbReference>
<dbReference type="Gene3D" id="2.10.25.10">
    <property type="entry name" value="Laminin"/>
    <property type="match status" value="6"/>
</dbReference>
<dbReference type="InterPro" id="IPR013320">
    <property type="entry name" value="ConA-like_dom_sf"/>
</dbReference>
<dbReference type="InterPro" id="IPR001881">
    <property type="entry name" value="EGF-like_Ca-bd_dom"/>
</dbReference>
<dbReference type="InterPro" id="IPR000742">
    <property type="entry name" value="EGF-like_dom"/>
</dbReference>
<dbReference type="InterPro" id="IPR000152">
    <property type="entry name" value="EGF-type_Asp/Asn_hydroxyl_site"/>
</dbReference>
<dbReference type="InterPro" id="IPR018097">
    <property type="entry name" value="EGF_Ca-bd_CS"/>
</dbReference>
<dbReference type="InterPro" id="IPR024731">
    <property type="entry name" value="EGF_dom"/>
</dbReference>
<dbReference type="InterPro" id="IPR009030">
    <property type="entry name" value="Growth_fac_rcpt_cys_sf"/>
</dbReference>
<dbReference type="InterPro" id="IPR001791">
    <property type="entry name" value="Laminin_G"/>
</dbReference>
<dbReference type="InterPro" id="IPR049883">
    <property type="entry name" value="NOTCH1_EGF-like"/>
</dbReference>
<dbReference type="InterPro" id="IPR051586">
    <property type="entry name" value="PKC-binding_NELL"/>
</dbReference>
<dbReference type="InterPro" id="IPR048287">
    <property type="entry name" value="TSPN-like_N"/>
</dbReference>
<dbReference type="InterPro" id="IPR001007">
    <property type="entry name" value="VWF_dom"/>
</dbReference>
<dbReference type="PANTHER" id="PTHR24042">
    <property type="entry name" value="NEL HOMOLOG"/>
    <property type="match status" value="1"/>
</dbReference>
<dbReference type="PANTHER" id="PTHR24042:SF2">
    <property type="entry name" value="PROTEIN KINASE C-BINDING PROTEIN NELL1"/>
    <property type="match status" value="1"/>
</dbReference>
<dbReference type="Pfam" id="PF12947">
    <property type="entry name" value="EGF_3"/>
    <property type="match status" value="1"/>
</dbReference>
<dbReference type="Pfam" id="PF07645">
    <property type="entry name" value="EGF_CA"/>
    <property type="match status" value="3"/>
</dbReference>
<dbReference type="Pfam" id="PF02210">
    <property type="entry name" value="Laminin_G_2"/>
    <property type="match status" value="1"/>
</dbReference>
<dbReference type="Pfam" id="PF00093">
    <property type="entry name" value="VWC"/>
    <property type="match status" value="2"/>
</dbReference>
<dbReference type="SMART" id="SM00181">
    <property type="entry name" value="EGF"/>
    <property type="match status" value="6"/>
</dbReference>
<dbReference type="SMART" id="SM00179">
    <property type="entry name" value="EGF_CA"/>
    <property type="match status" value="5"/>
</dbReference>
<dbReference type="SMART" id="SM00282">
    <property type="entry name" value="LamG"/>
    <property type="match status" value="1"/>
</dbReference>
<dbReference type="SMART" id="SM00210">
    <property type="entry name" value="TSPN"/>
    <property type="match status" value="1"/>
</dbReference>
<dbReference type="SMART" id="SM00214">
    <property type="entry name" value="VWC"/>
    <property type="match status" value="4"/>
</dbReference>
<dbReference type="SMART" id="SM00215">
    <property type="entry name" value="VWC_out"/>
    <property type="match status" value="2"/>
</dbReference>
<dbReference type="SUPFAM" id="SSF49899">
    <property type="entry name" value="Concanavalin A-like lectins/glucanases"/>
    <property type="match status" value="1"/>
</dbReference>
<dbReference type="SUPFAM" id="SSF57196">
    <property type="entry name" value="EGF/Laminin"/>
    <property type="match status" value="2"/>
</dbReference>
<dbReference type="SUPFAM" id="SSF57603">
    <property type="entry name" value="FnI-like domain"/>
    <property type="match status" value="3"/>
</dbReference>
<dbReference type="SUPFAM" id="SSF57184">
    <property type="entry name" value="Growth factor receptor domain"/>
    <property type="match status" value="1"/>
</dbReference>
<dbReference type="PROSITE" id="PS00010">
    <property type="entry name" value="ASX_HYDROXYL"/>
    <property type="match status" value="3"/>
</dbReference>
<dbReference type="PROSITE" id="PS00022">
    <property type="entry name" value="EGF_1"/>
    <property type="match status" value="1"/>
</dbReference>
<dbReference type="PROSITE" id="PS01186">
    <property type="entry name" value="EGF_2"/>
    <property type="match status" value="3"/>
</dbReference>
<dbReference type="PROSITE" id="PS50026">
    <property type="entry name" value="EGF_3"/>
    <property type="match status" value="5"/>
</dbReference>
<dbReference type="PROSITE" id="PS01187">
    <property type="entry name" value="EGF_CA"/>
    <property type="match status" value="3"/>
</dbReference>
<dbReference type="PROSITE" id="PS50025">
    <property type="entry name" value="LAM_G_DOMAIN"/>
    <property type="match status" value="1"/>
</dbReference>
<dbReference type="PROSITE" id="PS01208">
    <property type="entry name" value="VWFC_1"/>
    <property type="match status" value="2"/>
</dbReference>
<dbReference type="PROSITE" id="PS50184">
    <property type="entry name" value="VWFC_2"/>
    <property type="match status" value="2"/>
</dbReference>
<gene>
    <name type="primary">Nell1</name>
</gene>
<name>NELL1_MOUSE</name>
<comment type="function">
    <text evidence="7">Plays a role in the control of cell growth and differentiation. Promotes osteoblast cell differentiation and terminal mineralization.</text>
</comment>
<comment type="subunit">
    <text evidence="1 2 8">Homotrimer (By similarity). Binds to PKC beta-1 (By similarity). Interacts with ATRAID; the interaction promotes osteoblast cell differentiation and mineralization (By similarity). Interacts with ROBO3 (PubMed:26586761).</text>
</comment>
<comment type="subcellular location">
    <subcellularLocation>
        <location evidence="2">Cytoplasm</location>
    </subcellularLocation>
    <subcellularLocation>
        <location evidence="2">Nucleus envelope</location>
    </subcellularLocation>
    <subcellularLocation>
        <location evidence="1">Secreted</location>
    </subcellularLocation>
    <text evidence="2">Colocalizes with ATRAID on the nuclear envelope and the perinuclear region.</text>
</comment>
<comment type="miscellaneous">
    <text evidence="2">It has been demonstrated that ROBO3 binds to both NELL1 and NELL2. However, NELL1 is not expressed in the spinal cord at the time of commissural axon growth to the midline and has no significant effect on commissural axon repulsion in vitro, suggesting that NELL1 is not a functional ligand for ROBO3 in commissural axons. It remains possible, however, that NELL1 functions as a ligand for ROBO3 at another spatiotemporal location.</text>
</comment>
<reference key="1">
    <citation type="journal article" date="2006" name="Hum. Mol. Genet.">
        <title>Nell1-deficient mice have reduced expression of extracellular matrix proteins causing cranial and vertebral defects.</title>
        <authorList>
            <person name="Desai J."/>
            <person name="Shannon M.E."/>
            <person name="Johnson M.D."/>
            <person name="Ruff D.W."/>
            <person name="Hughes L.A."/>
            <person name="Kerley M.K."/>
            <person name="Carpenter D.A."/>
            <person name="Johnson D.K."/>
            <person name="Rinchik E.M."/>
            <person name="Culiat C.T."/>
        </authorList>
    </citation>
    <scope>NUCLEOTIDE SEQUENCE [MRNA]</scope>
    <scope>FUNCTION</scope>
    <source>
        <strain>BJR</strain>
        <tissue>Head</tissue>
    </source>
</reference>
<reference key="2">
    <citation type="journal article" date="2015" name="Science">
        <title>Operational redundancy in axon guidance through the multifunctional receptor Robo3 and its ligand NELL2.</title>
        <authorList>
            <person name="Jaworski A."/>
            <person name="Tom I."/>
            <person name="Tong R.K."/>
            <person name="Gildea H.K."/>
            <person name="Koch A.W."/>
            <person name="Gonzalez L.C."/>
            <person name="Tessier-Lavigne M."/>
        </authorList>
    </citation>
    <scope>INTERACTION WITH ROBO3</scope>
</reference>
<feature type="signal peptide" evidence="3">
    <location>
        <begin position="1"/>
        <end position="21"/>
    </location>
</feature>
<feature type="chain" id="PRO_0000322642" description="Protein kinase C-binding protein NELL1">
    <location>
        <begin position="22"/>
        <end position="810"/>
    </location>
</feature>
<feature type="domain" description="Laminin G-like" evidence="5">
    <location>
        <begin position="57"/>
        <end position="227"/>
    </location>
</feature>
<feature type="domain" description="VWFC 1" evidence="6">
    <location>
        <begin position="271"/>
        <end position="332"/>
    </location>
</feature>
<feature type="domain" description="EGF-like 1; calcium-binding" evidence="4">
    <location>
        <begin position="434"/>
        <end position="475"/>
    </location>
</feature>
<feature type="domain" description="EGF-like 2; calcium-binding" evidence="4">
    <location>
        <begin position="476"/>
        <end position="516"/>
    </location>
</feature>
<feature type="domain" description="EGF-like 3" evidence="4">
    <location>
        <begin position="517"/>
        <end position="547"/>
    </location>
</feature>
<feature type="domain" description="EGF-like 4; calcium-binding" evidence="4">
    <location>
        <begin position="549"/>
        <end position="587"/>
    </location>
</feature>
<feature type="domain" description="EGF-like 5; calcium-binding" evidence="4">
    <location>
        <begin position="596"/>
        <end position="631"/>
    </location>
</feature>
<feature type="domain" description="VWFC 2" evidence="6">
    <location>
        <begin position="632"/>
        <end position="687"/>
    </location>
</feature>
<feature type="domain" description="VWFC 3" evidence="6">
    <location>
        <begin position="692"/>
        <end position="750"/>
    </location>
</feature>
<feature type="binding site" evidence="2">
    <location>
        <position position="434"/>
    </location>
    <ligand>
        <name>Ca(2+)</name>
        <dbReference type="ChEBI" id="CHEBI:29108"/>
    </ligand>
</feature>
<feature type="binding site" evidence="2">
    <location>
        <position position="435"/>
    </location>
    <ligand>
        <name>Ca(2+)</name>
        <dbReference type="ChEBI" id="CHEBI:29108"/>
    </ligand>
</feature>
<feature type="binding site" evidence="2">
    <location>
        <position position="437"/>
    </location>
    <ligand>
        <name>Ca(2+)</name>
        <dbReference type="ChEBI" id="CHEBI:29108"/>
    </ligand>
</feature>
<feature type="binding site" evidence="2">
    <location>
        <position position="453"/>
    </location>
    <ligand>
        <name>Ca(2+)</name>
        <dbReference type="ChEBI" id="CHEBI:29108"/>
    </ligand>
</feature>
<feature type="binding site" evidence="2">
    <location>
        <position position="454"/>
    </location>
    <ligand>
        <name>Ca(2+)</name>
        <dbReference type="ChEBI" id="CHEBI:29108"/>
    </ligand>
</feature>
<feature type="binding site" evidence="2">
    <location>
        <position position="457"/>
    </location>
    <ligand>
        <name>Ca(2+)</name>
        <dbReference type="ChEBI" id="CHEBI:29108"/>
    </ligand>
</feature>
<feature type="glycosylation site" description="N-linked (GlcNAc...) asparagine" evidence="3">
    <location>
        <position position="40"/>
    </location>
</feature>
<feature type="glycosylation site" description="N-linked (GlcNAc...) asparagine" evidence="3">
    <location>
        <position position="53"/>
    </location>
</feature>
<feature type="glycosylation site" description="N-linked (GlcNAc...) asparagine" evidence="3">
    <location>
        <position position="83"/>
    </location>
</feature>
<feature type="glycosylation site" description="N-linked (GlcNAc...) asparagine" evidence="3">
    <location>
        <position position="224"/>
    </location>
</feature>
<feature type="glycosylation site" description="N-linked (GlcNAc...) asparagine" evidence="3">
    <location>
        <position position="294"/>
    </location>
</feature>
<feature type="glycosylation site" description="N-linked (GlcNAc...) asparagine" evidence="3">
    <location>
        <position position="372"/>
    </location>
</feature>
<feature type="glycosylation site" description="N-linked (GlcNAc...) asparagine" evidence="2">
    <location>
        <position position="511"/>
    </location>
</feature>
<feature type="glycosylation site" description="N-linked (GlcNAc...) asparagine" evidence="3">
    <location>
        <position position="562"/>
    </location>
</feature>
<feature type="glycosylation site" description="N-linked (GlcNAc...) asparagine" evidence="3">
    <location>
        <position position="609"/>
    </location>
</feature>
<feature type="glycosylation site" description="N-linked (GlcNAc...) asparagine" evidence="3">
    <location>
        <position position="708"/>
    </location>
</feature>
<feature type="disulfide bond" evidence="2">
    <location>
        <begin position="395"/>
        <end position="407"/>
    </location>
</feature>
<feature type="disulfide bond" evidence="2">
    <location>
        <begin position="401"/>
        <end position="416"/>
    </location>
</feature>
<feature type="disulfide bond" evidence="2">
    <location>
        <begin position="418"/>
        <end position="432"/>
    </location>
</feature>
<feature type="disulfide bond" evidence="2">
    <location>
        <begin position="438"/>
        <end position="451"/>
    </location>
</feature>
<feature type="disulfide bond" evidence="2">
    <location>
        <begin position="445"/>
        <end position="460"/>
    </location>
</feature>
<feature type="disulfide bond" evidence="2">
    <location>
        <begin position="462"/>
        <end position="474"/>
    </location>
</feature>
<feature type="disulfide bond" evidence="2">
    <location>
        <begin position="480"/>
        <end position="493"/>
    </location>
</feature>
<feature type="disulfide bond" evidence="2">
    <location>
        <begin position="487"/>
        <end position="502"/>
    </location>
</feature>
<feature type="disulfide bond" evidence="2">
    <location>
        <begin position="504"/>
        <end position="515"/>
    </location>
</feature>
<feature type="disulfide bond" evidence="4">
    <location>
        <begin position="519"/>
        <end position="529"/>
    </location>
</feature>
<feature type="disulfide bond" evidence="4">
    <location>
        <begin position="523"/>
        <end position="535"/>
    </location>
</feature>
<feature type="disulfide bond" evidence="4">
    <location>
        <begin position="537"/>
        <end position="546"/>
    </location>
</feature>
<feature type="disulfide bond" evidence="4">
    <location>
        <begin position="553"/>
        <end position="566"/>
    </location>
</feature>
<feature type="disulfide bond" evidence="4">
    <location>
        <begin position="560"/>
        <end position="575"/>
    </location>
</feature>
<feature type="disulfide bond" evidence="4">
    <location>
        <begin position="577"/>
        <end position="594"/>
    </location>
</feature>
<feature type="disulfide bond" evidence="4">
    <location>
        <begin position="600"/>
        <end position="613"/>
    </location>
</feature>
<feature type="disulfide bond" evidence="4">
    <location>
        <begin position="607"/>
        <end position="622"/>
    </location>
</feature>
<feature type="disulfide bond" evidence="4">
    <location>
        <begin position="624"/>
        <end position="630"/>
    </location>
</feature>
<proteinExistence type="evidence at protein level"/>